<proteinExistence type="inferred from homology"/>
<evidence type="ECO:0000255" key="1">
    <source>
        <dbReference type="HAMAP-Rule" id="MF_01339"/>
    </source>
</evidence>
<accession>Q213J3</accession>
<feature type="chain" id="PRO_0000251410" description="Ribulose bisphosphate carboxylase">
    <location>
        <begin position="1"/>
        <end position="461"/>
    </location>
</feature>
<feature type="active site" description="Proton acceptor" evidence="1">
    <location>
        <position position="167"/>
    </location>
</feature>
<feature type="active site" description="Proton acceptor" evidence="1">
    <location>
        <position position="288"/>
    </location>
</feature>
<feature type="binding site" description="in homodimeric partner" evidence="1">
    <location>
        <position position="112"/>
    </location>
    <ligand>
        <name>substrate</name>
    </ligand>
</feature>
<feature type="binding site" evidence="1">
    <location>
        <position position="169"/>
    </location>
    <ligand>
        <name>substrate</name>
    </ligand>
</feature>
<feature type="binding site" description="via carbamate group" evidence="1">
    <location>
        <position position="192"/>
    </location>
    <ligand>
        <name>Mg(2+)</name>
        <dbReference type="ChEBI" id="CHEBI:18420"/>
    </ligand>
</feature>
<feature type="binding site" evidence="1">
    <location>
        <position position="194"/>
    </location>
    <ligand>
        <name>Mg(2+)</name>
        <dbReference type="ChEBI" id="CHEBI:18420"/>
    </ligand>
</feature>
<feature type="binding site" evidence="1">
    <location>
        <position position="195"/>
    </location>
    <ligand>
        <name>Mg(2+)</name>
        <dbReference type="ChEBI" id="CHEBI:18420"/>
    </ligand>
</feature>
<feature type="binding site" evidence="1">
    <location>
        <position position="289"/>
    </location>
    <ligand>
        <name>substrate</name>
    </ligand>
</feature>
<feature type="binding site" evidence="1">
    <location>
        <position position="322"/>
    </location>
    <ligand>
        <name>substrate</name>
    </ligand>
</feature>
<feature type="binding site" evidence="1">
    <location>
        <position position="369"/>
    </location>
    <ligand>
        <name>substrate</name>
    </ligand>
</feature>
<feature type="site" description="Transition state stabilizer" evidence="1">
    <location>
        <position position="330"/>
    </location>
</feature>
<feature type="modified residue" description="N6-carboxylysine" evidence="1">
    <location>
        <position position="192"/>
    </location>
</feature>
<organism>
    <name type="scientific">Rhodopseudomonas palustris (strain BisB18)</name>
    <dbReference type="NCBI Taxonomy" id="316056"/>
    <lineage>
        <taxon>Bacteria</taxon>
        <taxon>Pseudomonadati</taxon>
        <taxon>Pseudomonadota</taxon>
        <taxon>Alphaproteobacteria</taxon>
        <taxon>Hyphomicrobiales</taxon>
        <taxon>Nitrobacteraceae</taxon>
        <taxon>Rhodopseudomonas</taxon>
    </lineage>
</organism>
<name>RBL2_RHOPB</name>
<gene>
    <name evidence="1" type="primary">cbbM</name>
    <name type="ordered locus">RPC_2895</name>
</gene>
<protein>
    <recommendedName>
        <fullName evidence="1">Ribulose bisphosphate carboxylase</fullName>
        <shortName evidence="1">RuBisCO</shortName>
        <ecNumber evidence="1">4.1.1.39</ecNumber>
    </recommendedName>
</protein>
<dbReference type="EC" id="4.1.1.39" evidence="1"/>
<dbReference type="EMBL" id="CP000301">
    <property type="protein sequence ID" value="ABD88443.1"/>
    <property type="molecule type" value="Genomic_DNA"/>
</dbReference>
<dbReference type="SMR" id="Q213J3"/>
<dbReference type="STRING" id="316056.RPC_2895"/>
<dbReference type="KEGG" id="rpc:RPC_2895"/>
<dbReference type="eggNOG" id="COG1850">
    <property type="taxonomic scope" value="Bacteria"/>
</dbReference>
<dbReference type="HOGENOM" id="CLU_031450_3_1_5"/>
<dbReference type="OrthoDB" id="9764279at2"/>
<dbReference type="GO" id="GO:0000287">
    <property type="term" value="F:magnesium ion binding"/>
    <property type="evidence" value="ECO:0007669"/>
    <property type="project" value="UniProtKB-UniRule"/>
</dbReference>
<dbReference type="GO" id="GO:0004497">
    <property type="term" value="F:monooxygenase activity"/>
    <property type="evidence" value="ECO:0007669"/>
    <property type="project" value="UniProtKB-KW"/>
</dbReference>
<dbReference type="GO" id="GO:0016984">
    <property type="term" value="F:ribulose-bisphosphate carboxylase activity"/>
    <property type="evidence" value="ECO:0007669"/>
    <property type="project" value="UniProtKB-UniRule"/>
</dbReference>
<dbReference type="GO" id="GO:0019253">
    <property type="term" value="P:reductive pentose-phosphate cycle"/>
    <property type="evidence" value="ECO:0007669"/>
    <property type="project" value="UniProtKB-KW"/>
</dbReference>
<dbReference type="CDD" id="cd08211">
    <property type="entry name" value="RuBisCO_large_II"/>
    <property type="match status" value="1"/>
</dbReference>
<dbReference type="Gene3D" id="3.20.20.110">
    <property type="entry name" value="Ribulose bisphosphate carboxylase, large subunit, C-terminal domain"/>
    <property type="match status" value="1"/>
</dbReference>
<dbReference type="Gene3D" id="3.30.70.150">
    <property type="entry name" value="RuBisCO large subunit, N-terminal domain"/>
    <property type="match status" value="1"/>
</dbReference>
<dbReference type="HAMAP" id="MF_01339">
    <property type="entry name" value="RuBisCO_L_type2"/>
    <property type="match status" value="1"/>
</dbReference>
<dbReference type="InterPro" id="IPR033966">
    <property type="entry name" value="RuBisCO"/>
</dbReference>
<dbReference type="InterPro" id="IPR020878">
    <property type="entry name" value="RuBisCo_large_chain_AS"/>
</dbReference>
<dbReference type="InterPro" id="IPR000685">
    <property type="entry name" value="RuBisCO_lsu_C"/>
</dbReference>
<dbReference type="InterPro" id="IPR036376">
    <property type="entry name" value="RuBisCO_lsu_C_sf"/>
</dbReference>
<dbReference type="InterPro" id="IPR017443">
    <property type="entry name" value="RuBisCO_lsu_fd_N"/>
</dbReference>
<dbReference type="InterPro" id="IPR036422">
    <property type="entry name" value="RuBisCO_lsu_N_sf"/>
</dbReference>
<dbReference type="InterPro" id="IPR020871">
    <property type="entry name" value="RuBisCO_lsuII"/>
</dbReference>
<dbReference type="NCBIfam" id="NF010002">
    <property type="entry name" value="PRK13475.1"/>
    <property type="match status" value="1"/>
</dbReference>
<dbReference type="PANTHER" id="PTHR42704">
    <property type="entry name" value="RIBULOSE BISPHOSPHATE CARBOXYLASE"/>
    <property type="match status" value="1"/>
</dbReference>
<dbReference type="PANTHER" id="PTHR42704:SF17">
    <property type="entry name" value="RIBULOSE BISPHOSPHATE CARBOXYLASE LARGE CHAIN"/>
    <property type="match status" value="1"/>
</dbReference>
<dbReference type="Pfam" id="PF00016">
    <property type="entry name" value="RuBisCO_large"/>
    <property type="match status" value="1"/>
</dbReference>
<dbReference type="Pfam" id="PF02788">
    <property type="entry name" value="RuBisCO_large_N"/>
    <property type="match status" value="1"/>
</dbReference>
<dbReference type="SFLD" id="SFLDS00014">
    <property type="entry name" value="RuBisCO"/>
    <property type="match status" value="1"/>
</dbReference>
<dbReference type="SFLD" id="SFLDG00301">
    <property type="entry name" value="RuBisCO-like_proteins"/>
    <property type="match status" value="1"/>
</dbReference>
<dbReference type="SUPFAM" id="SSF51649">
    <property type="entry name" value="RuBisCo, C-terminal domain"/>
    <property type="match status" value="1"/>
</dbReference>
<dbReference type="SUPFAM" id="SSF54966">
    <property type="entry name" value="RuBisCO, large subunit, small (N-terminal) domain"/>
    <property type="match status" value="1"/>
</dbReference>
<dbReference type="PROSITE" id="PS00157">
    <property type="entry name" value="RUBISCO_LARGE"/>
    <property type="match status" value="1"/>
</dbReference>
<reference key="1">
    <citation type="submission" date="2006-03" db="EMBL/GenBank/DDBJ databases">
        <title>Complete sequence of Rhodopseudomonas palustris BisB18.</title>
        <authorList>
            <consortium name="US DOE Joint Genome Institute"/>
            <person name="Copeland A."/>
            <person name="Lucas S."/>
            <person name="Lapidus A."/>
            <person name="Barry K."/>
            <person name="Detter J.C."/>
            <person name="Glavina del Rio T."/>
            <person name="Hammon N."/>
            <person name="Israni S."/>
            <person name="Dalin E."/>
            <person name="Tice H."/>
            <person name="Pitluck S."/>
            <person name="Chain P."/>
            <person name="Malfatti S."/>
            <person name="Shin M."/>
            <person name="Vergez L."/>
            <person name="Schmutz J."/>
            <person name="Larimer F."/>
            <person name="Land M."/>
            <person name="Hauser L."/>
            <person name="Pelletier D.A."/>
            <person name="Kyrpides N."/>
            <person name="Anderson I."/>
            <person name="Oda Y."/>
            <person name="Harwood C.S."/>
            <person name="Richardson P."/>
        </authorList>
    </citation>
    <scope>NUCLEOTIDE SEQUENCE [LARGE SCALE GENOMIC DNA]</scope>
    <source>
        <strain>BisB18</strain>
    </source>
</reference>
<keyword id="KW-0113">Calvin cycle</keyword>
<keyword id="KW-0120">Carbon dioxide fixation</keyword>
<keyword id="KW-0456">Lyase</keyword>
<keyword id="KW-0460">Magnesium</keyword>
<keyword id="KW-0479">Metal-binding</keyword>
<keyword id="KW-0503">Monooxygenase</keyword>
<keyword id="KW-0560">Oxidoreductase</keyword>
<keyword id="KW-0602">Photosynthesis</keyword>
<comment type="function">
    <text evidence="1">RuBisCO catalyzes two reactions: the carboxylation of D-ribulose 1,5-bisphosphate, the primary event in carbon dioxide fixation, as well as the oxidative fragmentation of the pentose substrate. Both reactions occur simultaneously and in competition at the same active site.</text>
</comment>
<comment type="catalytic activity">
    <reaction evidence="1">
        <text>2 (2R)-3-phosphoglycerate + 2 H(+) = D-ribulose 1,5-bisphosphate + CO2 + H2O</text>
        <dbReference type="Rhea" id="RHEA:23124"/>
        <dbReference type="ChEBI" id="CHEBI:15377"/>
        <dbReference type="ChEBI" id="CHEBI:15378"/>
        <dbReference type="ChEBI" id="CHEBI:16526"/>
        <dbReference type="ChEBI" id="CHEBI:57870"/>
        <dbReference type="ChEBI" id="CHEBI:58272"/>
        <dbReference type="EC" id="4.1.1.39"/>
    </reaction>
</comment>
<comment type="catalytic activity">
    <reaction evidence="1">
        <text>D-ribulose 1,5-bisphosphate + O2 = 2-phosphoglycolate + (2R)-3-phosphoglycerate + 2 H(+)</text>
        <dbReference type="Rhea" id="RHEA:36631"/>
        <dbReference type="ChEBI" id="CHEBI:15378"/>
        <dbReference type="ChEBI" id="CHEBI:15379"/>
        <dbReference type="ChEBI" id="CHEBI:57870"/>
        <dbReference type="ChEBI" id="CHEBI:58033"/>
        <dbReference type="ChEBI" id="CHEBI:58272"/>
    </reaction>
</comment>
<comment type="cofactor">
    <cofactor evidence="1">
        <name>Mg(2+)</name>
        <dbReference type="ChEBI" id="CHEBI:18420"/>
    </cofactor>
    <text evidence="1">Binds 1 Mg(2+) ion per subunit.</text>
</comment>
<comment type="subunit">
    <text evidence="1">Homodimer.</text>
</comment>
<comment type="miscellaneous">
    <text evidence="1">The basic functional RuBisCO is composed of a large chain homodimer in a 'head-to-tail' conformation. In contrast to form I RuBisCO, the form II RuBisCO are composed solely of large subunits.</text>
</comment>
<comment type="similarity">
    <text evidence="1">Belongs to the RuBisCO large chain family. Type II subfamily.</text>
</comment>
<sequence length="461" mass="50554">MDQSNRYANLNLTEKDLIAGGRHVLCAYIMKPKAGFGNFLQTAAHFAAESSTGTNVEVSTTDDFTRGVDALVYEIDEAKQLMKIAYPIDLFDRNIIDGRAMIASFLTLTIGNNQGMGDVEYAKMYDFYVPPAYLKLFDGPSTTIKDLWRVLGRPVVDGGFIVGTIIKPKLGLRPQPFANACYDFWLGGDFIKNDEPQGNQVFAPFKETVRLVNDAMRRAQDKTGQPKLFSFNITADDHHEMVARGEYILETFADNADHIAFLVDGYVAGPAAVTTARRRFPKQYLHYHRAGHGAVTSPQAKRGYTAFVLSKMARLQGASGIHTGTMGFGKMEGEAADRAMAYMITEDSADGPYFHQEWLGMNPTTPIISGGMNALRMPGFFKNLGHSNLIMTAGGGAFGHIDGGAAGAKSLRQAEQCWKEGADPVAFAKEHREFARAFESFPHDADALYPNWRGQLGLAAA</sequence>